<comment type="function">
    <text evidence="1">Mitochondrial membrane ATP synthase (F(1)F(0) ATP synthase or Complex V) produces ATP from ADP in the presence of a proton gradient across the membrane which is generated by electron transport complexes of the respiratory chain. F-type ATPases consist of two structural domains, F(1) - containing the extramembraneous catalytic core and F(0) - containing the membrane proton channel, linked together by a central stalk and a peripheral stalk. During catalysis, ATP synthesis in the catalytic domain of F(1) is coupled via a rotary mechanism of the central stalk subunits to proton translocation. Part of the complex F(0) domain. Minor subunit located with subunit a in the membrane (By similarity).</text>
</comment>
<comment type="subunit">
    <text evidence="1">F-type ATPases have 2 components, CF(1) - the catalytic core - and CF(0) - the membrane proton channel.</text>
</comment>
<comment type="subcellular location">
    <subcellularLocation>
        <location>Mitochondrion membrane</location>
        <topology>Single-pass membrane protein</topology>
    </subcellularLocation>
</comment>
<comment type="similarity">
    <text evidence="3">Belongs to the ATPase protein 8 family.</text>
</comment>
<geneLocation type="mitochondrion"/>
<reference key="1">
    <citation type="journal article" date="1995" name="Genetics">
        <title>Complete sequence of the mitochondrial DNA of the annelid worm Lumbricus terrestris.</title>
        <authorList>
            <person name="Boore J.L."/>
            <person name="Brown W.M."/>
        </authorList>
    </citation>
    <scope>NUCLEOTIDE SEQUENCE [GENOMIC DNA]</scope>
</reference>
<accession>Q34942</accession>
<gene>
    <name type="primary">MT-ATP8</name>
    <name type="synonym">ATP8</name>
    <name type="synonym">ATPASE8</name>
    <name type="synonym">MTATP8</name>
</gene>
<sequence>MPHLSPMSWITSMLMFWISVSILFSTLWWSNNYLFSSKMTNCAPKSLTPWNWL</sequence>
<feature type="chain" id="PRO_0000195547" description="ATP synthase protein 8">
    <location>
        <begin position="1"/>
        <end position="53"/>
    </location>
</feature>
<feature type="transmembrane region" description="Helical" evidence="2">
    <location>
        <begin position="9"/>
        <end position="29"/>
    </location>
</feature>
<organism>
    <name type="scientific">Lumbricus terrestris</name>
    <name type="common">Common earthworm</name>
    <dbReference type="NCBI Taxonomy" id="6398"/>
    <lineage>
        <taxon>Eukaryota</taxon>
        <taxon>Metazoa</taxon>
        <taxon>Spiralia</taxon>
        <taxon>Lophotrochozoa</taxon>
        <taxon>Annelida</taxon>
        <taxon>Clitellata</taxon>
        <taxon>Oligochaeta</taxon>
        <taxon>Crassiclitellata</taxon>
        <taxon>Lumbricina</taxon>
        <taxon>Lumbricidae</taxon>
        <taxon>Lumbricinae</taxon>
        <taxon>Lumbricus</taxon>
    </lineage>
</organism>
<name>ATP8_LUMTE</name>
<dbReference type="EMBL" id="U24570">
    <property type="protein sequence ID" value="AAC46866.1"/>
    <property type="molecule type" value="Genomic_DNA"/>
</dbReference>
<dbReference type="PIR" id="S58987">
    <property type="entry name" value="S58987"/>
</dbReference>
<dbReference type="RefSeq" id="NP_008240.1">
    <property type="nucleotide sequence ID" value="NC_001673.1"/>
</dbReference>
<dbReference type="SMR" id="Q34942"/>
<dbReference type="GeneID" id="807922"/>
<dbReference type="CTD" id="4509"/>
<dbReference type="GO" id="GO:0031966">
    <property type="term" value="C:mitochondrial membrane"/>
    <property type="evidence" value="ECO:0007669"/>
    <property type="project" value="UniProtKB-SubCell"/>
</dbReference>
<dbReference type="GO" id="GO:0045259">
    <property type="term" value="C:proton-transporting ATP synthase complex"/>
    <property type="evidence" value="ECO:0007669"/>
    <property type="project" value="UniProtKB-KW"/>
</dbReference>
<dbReference type="GO" id="GO:0006754">
    <property type="term" value="P:ATP biosynthetic process"/>
    <property type="evidence" value="ECO:0007669"/>
    <property type="project" value="UniProtKB-KW"/>
</dbReference>
<dbReference type="GO" id="GO:1902600">
    <property type="term" value="P:proton transmembrane transport"/>
    <property type="evidence" value="ECO:0007669"/>
    <property type="project" value="UniProtKB-KW"/>
</dbReference>
<evidence type="ECO:0000250" key="1"/>
<evidence type="ECO:0000255" key="2"/>
<evidence type="ECO:0000305" key="3"/>
<protein>
    <recommendedName>
        <fullName>ATP synthase protein 8</fullName>
    </recommendedName>
    <alternativeName>
        <fullName>A6L</fullName>
    </alternativeName>
    <alternativeName>
        <fullName>F-ATPase subunit 8</fullName>
    </alternativeName>
</protein>
<keyword id="KW-0066">ATP synthesis</keyword>
<keyword id="KW-0138">CF(0)</keyword>
<keyword id="KW-0375">Hydrogen ion transport</keyword>
<keyword id="KW-0406">Ion transport</keyword>
<keyword id="KW-0472">Membrane</keyword>
<keyword id="KW-0496">Mitochondrion</keyword>
<keyword id="KW-0812">Transmembrane</keyword>
<keyword id="KW-1133">Transmembrane helix</keyword>
<keyword id="KW-0813">Transport</keyword>
<proteinExistence type="inferred from homology"/>